<feature type="chain" id="PRO_1000023256" description="Thymidylate kinase">
    <location>
        <begin position="1"/>
        <end position="210"/>
    </location>
</feature>
<feature type="binding site" evidence="1">
    <location>
        <begin position="10"/>
        <end position="17"/>
    </location>
    <ligand>
        <name>ATP</name>
        <dbReference type="ChEBI" id="CHEBI:30616"/>
    </ligand>
</feature>
<accession>Q4KFR2</accession>
<protein>
    <recommendedName>
        <fullName evidence="1">Thymidylate kinase</fullName>
        <ecNumber evidence="1">2.7.4.9</ecNumber>
    </recommendedName>
    <alternativeName>
        <fullName evidence="1">dTMP kinase</fullName>
    </alternativeName>
</protein>
<sequence>MTGLFITLEGPEGAGKSTNREYLAERLRAAGIEVLLTREPGGTPLAERIRDVLLTPVEEVMNADTELLLVFAARAQHLATVIRPALERGAVVLCDRFTDSTYAYQGAGRGLSLARIAALEDFVQGELRPDLTLVFDLPVDVGLARASARGRLDRFEQEGQAFFQKVREAFLARAAAAPQRYVLVDAAQPLAQVQQSLDSLLPQLLERARG</sequence>
<reference key="1">
    <citation type="journal article" date="2005" name="Nat. Biotechnol.">
        <title>Complete genome sequence of the plant commensal Pseudomonas fluorescens Pf-5.</title>
        <authorList>
            <person name="Paulsen I.T."/>
            <person name="Press C.M."/>
            <person name="Ravel J."/>
            <person name="Kobayashi D.Y."/>
            <person name="Myers G.S.A."/>
            <person name="Mavrodi D.V."/>
            <person name="DeBoy R.T."/>
            <person name="Seshadri R."/>
            <person name="Ren Q."/>
            <person name="Madupu R."/>
            <person name="Dodson R.J."/>
            <person name="Durkin A.S."/>
            <person name="Brinkac L.M."/>
            <person name="Daugherty S.C."/>
            <person name="Sullivan S.A."/>
            <person name="Rosovitz M.J."/>
            <person name="Gwinn M.L."/>
            <person name="Zhou L."/>
            <person name="Schneider D.J."/>
            <person name="Cartinhour S.W."/>
            <person name="Nelson W.C."/>
            <person name="Weidman J."/>
            <person name="Watkins K."/>
            <person name="Tran K."/>
            <person name="Khouri H."/>
            <person name="Pierson E.A."/>
            <person name="Pierson L.S. III"/>
            <person name="Thomashow L.S."/>
            <person name="Loper J.E."/>
        </authorList>
    </citation>
    <scope>NUCLEOTIDE SEQUENCE [LARGE SCALE GENOMIC DNA]</scope>
    <source>
        <strain>ATCC BAA-477 / NRRL B-23932 / Pf-5</strain>
    </source>
</reference>
<keyword id="KW-0067">ATP-binding</keyword>
<keyword id="KW-0418">Kinase</keyword>
<keyword id="KW-0545">Nucleotide biosynthesis</keyword>
<keyword id="KW-0547">Nucleotide-binding</keyword>
<keyword id="KW-0808">Transferase</keyword>
<organism>
    <name type="scientific">Pseudomonas fluorescens (strain ATCC BAA-477 / NRRL B-23932 / Pf-5)</name>
    <dbReference type="NCBI Taxonomy" id="220664"/>
    <lineage>
        <taxon>Bacteria</taxon>
        <taxon>Pseudomonadati</taxon>
        <taxon>Pseudomonadota</taxon>
        <taxon>Gammaproteobacteria</taxon>
        <taxon>Pseudomonadales</taxon>
        <taxon>Pseudomonadaceae</taxon>
        <taxon>Pseudomonas</taxon>
    </lineage>
</organism>
<dbReference type="EC" id="2.7.4.9" evidence="1"/>
<dbReference type="EMBL" id="CP000076">
    <property type="protein sequence ID" value="AAY91090.1"/>
    <property type="molecule type" value="Genomic_DNA"/>
</dbReference>
<dbReference type="RefSeq" id="WP_011060122.1">
    <property type="nucleotide sequence ID" value="NC_004129.6"/>
</dbReference>
<dbReference type="SMR" id="Q4KFR2"/>
<dbReference type="STRING" id="220664.PFL_1801"/>
<dbReference type="KEGG" id="pfl:PFL_1801"/>
<dbReference type="PATRIC" id="fig|220664.5.peg.1835"/>
<dbReference type="eggNOG" id="COG0125">
    <property type="taxonomic scope" value="Bacteria"/>
</dbReference>
<dbReference type="HOGENOM" id="CLU_049131_0_2_6"/>
<dbReference type="Proteomes" id="UP000008540">
    <property type="component" value="Chromosome"/>
</dbReference>
<dbReference type="GO" id="GO:0005829">
    <property type="term" value="C:cytosol"/>
    <property type="evidence" value="ECO:0007669"/>
    <property type="project" value="TreeGrafter"/>
</dbReference>
<dbReference type="GO" id="GO:0005524">
    <property type="term" value="F:ATP binding"/>
    <property type="evidence" value="ECO:0007669"/>
    <property type="project" value="UniProtKB-UniRule"/>
</dbReference>
<dbReference type="GO" id="GO:0004798">
    <property type="term" value="F:dTMP kinase activity"/>
    <property type="evidence" value="ECO:0007669"/>
    <property type="project" value="UniProtKB-UniRule"/>
</dbReference>
<dbReference type="GO" id="GO:0006233">
    <property type="term" value="P:dTDP biosynthetic process"/>
    <property type="evidence" value="ECO:0007669"/>
    <property type="project" value="InterPro"/>
</dbReference>
<dbReference type="GO" id="GO:0006235">
    <property type="term" value="P:dTTP biosynthetic process"/>
    <property type="evidence" value="ECO:0007669"/>
    <property type="project" value="UniProtKB-UniRule"/>
</dbReference>
<dbReference type="GO" id="GO:0006227">
    <property type="term" value="P:dUDP biosynthetic process"/>
    <property type="evidence" value="ECO:0007669"/>
    <property type="project" value="TreeGrafter"/>
</dbReference>
<dbReference type="CDD" id="cd01672">
    <property type="entry name" value="TMPK"/>
    <property type="match status" value="1"/>
</dbReference>
<dbReference type="FunFam" id="3.40.50.300:FF:000225">
    <property type="entry name" value="Thymidylate kinase"/>
    <property type="match status" value="1"/>
</dbReference>
<dbReference type="Gene3D" id="3.40.50.300">
    <property type="entry name" value="P-loop containing nucleotide triphosphate hydrolases"/>
    <property type="match status" value="1"/>
</dbReference>
<dbReference type="HAMAP" id="MF_00165">
    <property type="entry name" value="Thymidylate_kinase"/>
    <property type="match status" value="1"/>
</dbReference>
<dbReference type="InterPro" id="IPR027417">
    <property type="entry name" value="P-loop_NTPase"/>
</dbReference>
<dbReference type="InterPro" id="IPR039430">
    <property type="entry name" value="Thymidylate_kin-like_dom"/>
</dbReference>
<dbReference type="InterPro" id="IPR018095">
    <property type="entry name" value="Thymidylate_kin_CS"/>
</dbReference>
<dbReference type="InterPro" id="IPR018094">
    <property type="entry name" value="Thymidylate_kinase"/>
</dbReference>
<dbReference type="NCBIfam" id="TIGR00041">
    <property type="entry name" value="DTMP_kinase"/>
    <property type="match status" value="1"/>
</dbReference>
<dbReference type="PANTHER" id="PTHR10344">
    <property type="entry name" value="THYMIDYLATE KINASE"/>
    <property type="match status" value="1"/>
</dbReference>
<dbReference type="PANTHER" id="PTHR10344:SF4">
    <property type="entry name" value="UMP-CMP KINASE 2, MITOCHONDRIAL"/>
    <property type="match status" value="1"/>
</dbReference>
<dbReference type="Pfam" id="PF02223">
    <property type="entry name" value="Thymidylate_kin"/>
    <property type="match status" value="1"/>
</dbReference>
<dbReference type="SUPFAM" id="SSF52540">
    <property type="entry name" value="P-loop containing nucleoside triphosphate hydrolases"/>
    <property type="match status" value="1"/>
</dbReference>
<dbReference type="PROSITE" id="PS01331">
    <property type="entry name" value="THYMIDYLATE_KINASE"/>
    <property type="match status" value="1"/>
</dbReference>
<proteinExistence type="inferred from homology"/>
<gene>
    <name evidence="1" type="primary">tmk</name>
    <name type="ordered locus">PFL_1801</name>
</gene>
<name>KTHY_PSEF5</name>
<evidence type="ECO:0000255" key="1">
    <source>
        <dbReference type="HAMAP-Rule" id="MF_00165"/>
    </source>
</evidence>
<comment type="function">
    <text evidence="1">Phosphorylation of dTMP to form dTDP in both de novo and salvage pathways of dTTP synthesis.</text>
</comment>
<comment type="catalytic activity">
    <reaction evidence="1">
        <text>dTMP + ATP = dTDP + ADP</text>
        <dbReference type="Rhea" id="RHEA:13517"/>
        <dbReference type="ChEBI" id="CHEBI:30616"/>
        <dbReference type="ChEBI" id="CHEBI:58369"/>
        <dbReference type="ChEBI" id="CHEBI:63528"/>
        <dbReference type="ChEBI" id="CHEBI:456216"/>
        <dbReference type="EC" id="2.7.4.9"/>
    </reaction>
</comment>
<comment type="similarity">
    <text evidence="1">Belongs to the thymidylate kinase family.</text>
</comment>